<name>RISB_BACC4</name>
<feature type="chain" id="PRO_1000195460" description="6,7-dimethyl-8-ribityllumazine synthase">
    <location>
        <begin position="1"/>
        <end position="153"/>
    </location>
</feature>
<feature type="active site" description="Proton donor" evidence="1">
    <location>
        <position position="87"/>
    </location>
</feature>
<feature type="binding site" evidence="1">
    <location>
        <position position="21"/>
    </location>
    <ligand>
        <name>5-amino-6-(D-ribitylamino)uracil</name>
        <dbReference type="ChEBI" id="CHEBI:15934"/>
    </ligand>
</feature>
<feature type="binding site" evidence="1">
    <location>
        <begin position="55"/>
        <end position="57"/>
    </location>
    <ligand>
        <name>5-amino-6-(D-ribitylamino)uracil</name>
        <dbReference type="ChEBI" id="CHEBI:15934"/>
    </ligand>
</feature>
<feature type="binding site" evidence="1">
    <location>
        <begin position="79"/>
        <end position="81"/>
    </location>
    <ligand>
        <name>5-amino-6-(D-ribitylamino)uracil</name>
        <dbReference type="ChEBI" id="CHEBI:15934"/>
    </ligand>
</feature>
<feature type="binding site" evidence="1">
    <location>
        <begin position="84"/>
        <end position="85"/>
    </location>
    <ligand>
        <name>(2S)-2-hydroxy-3-oxobutyl phosphate</name>
        <dbReference type="ChEBI" id="CHEBI:58830"/>
    </ligand>
</feature>
<feature type="binding site" evidence="1">
    <location>
        <position position="112"/>
    </location>
    <ligand>
        <name>5-amino-6-(D-ribitylamino)uracil</name>
        <dbReference type="ChEBI" id="CHEBI:15934"/>
    </ligand>
</feature>
<feature type="binding site" evidence="1">
    <location>
        <position position="126"/>
    </location>
    <ligand>
        <name>(2S)-2-hydroxy-3-oxobutyl phosphate</name>
        <dbReference type="ChEBI" id="CHEBI:58830"/>
    </ligand>
</feature>
<dbReference type="EC" id="2.5.1.78" evidence="1"/>
<dbReference type="EMBL" id="CP001176">
    <property type="protein sequence ID" value="ACK59777.1"/>
    <property type="molecule type" value="Genomic_DNA"/>
</dbReference>
<dbReference type="RefSeq" id="WP_000230899.1">
    <property type="nucleotide sequence ID" value="NZ_VEHB01000002.1"/>
</dbReference>
<dbReference type="SMR" id="B7HAY5"/>
<dbReference type="KEGG" id="bcb:BCB4264_A4223"/>
<dbReference type="HOGENOM" id="CLU_089358_1_1_9"/>
<dbReference type="UniPathway" id="UPA00275">
    <property type="reaction ID" value="UER00404"/>
</dbReference>
<dbReference type="Proteomes" id="UP000007096">
    <property type="component" value="Chromosome"/>
</dbReference>
<dbReference type="GO" id="GO:0005829">
    <property type="term" value="C:cytosol"/>
    <property type="evidence" value="ECO:0007669"/>
    <property type="project" value="TreeGrafter"/>
</dbReference>
<dbReference type="GO" id="GO:0009349">
    <property type="term" value="C:riboflavin synthase complex"/>
    <property type="evidence" value="ECO:0007669"/>
    <property type="project" value="InterPro"/>
</dbReference>
<dbReference type="GO" id="GO:0000906">
    <property type="term" value="F:6,7-dimethyl-8-ribityllumazine synthase activity"/>
    <property type="evidence" value="ECO:0007669"/>
    <property type="project" value="UniProtKB-UniRule"/>
</dbReference>
<dbReference type="GO" id="GO:0009231">
    <property type="term" value="P:riboflavin biosynthetic process"/>
    <property type="evidence" value="ECO:0007669"/>
    <property type="project" value="UniProtKB-UniRule"/>
</dbReference>
<dbReference type="CDD" id="cd09209">
    <property type="entry name" value="Lumazine_synthase-I"/>
    <property type="match status" value="1"/>
</dbReference>
<dbReference type="FunFam" id="3.40.50.960:FF:000001">
    <property type="entry name" value="6,7-dimethyl-8-ribityllumazine synthase"/>
    <property type="match status" value="1"/>
</dbReference>
<dbReference type="Gene3D" id="3.40.50.960">
    <property type="entry name" value="Lumazine/riboflavin synthase"/>
    <property type="match status" value="1"/>
</dbReference>
<dbReference type="HAMAP" id="MF_00178">
    <property type="entry name" value="Lumazine_synth"/>
    <property type="match status" value="1"/>
</dbReference>
<dbReference type="InterPro" id="IPR034964">
    <property type="entry name" value="LS"/>
</dbReference>
<dbReference type="InterPro" id="IPR002180">
    <property type="entry name" value="LS/RS"/>
</dbReference>
<dbReference type="InterPro" id="IPR036467">
    <property type="entry name" value="LS/RS_sf"/>
</dbReference>
<dbReference type="NCBIfam" id="TIGR00114">
    <property type="entry name" value="lumazine-synth"/>
    <property type="match status" value="1"/>
</dbReference>
<dbReference type="NCBIfam" id="NF000812">
    <property type="entry name" value="PRK00061.1-4"/>
    <property type="match status" value="1"/>
</dbReference>
<dbReference type="PANTHER" id="PTHR21058:SF0">
    <property type="entry name" value="6,7-DIMETHYL-8-RIBITYLLUMAZINE SYNTHASE"/>
    <property type="match status" value="1"/>
</dbReference>
<dbReference type="PANTHER" id="PTHR21058">
    <property type="entry name" value="6,7-DIMETHYL-8-RIBITYLLUMAZINE SYNTHASE DMRL SYNTHASE LUMAZINE SYNTHASE"/>
    <property type="match status" value="1"/>
</dbReference>
<dbReference type="Pfam" id="PF00885">
    <property type="entry name" value="DMRL_synthase"/>
    <property type="match status" value="1"/>
</dbReference>
<dbReference type="SUPFAM" id="SSF52121">
    <property type="entry name" value="Lumazine synthase"/>
    <property type="match status" value="1"/>
</dbReference>
<evidence type="ECO:0000255" key="1">
    <source>
        <dbReference type="HAMAP-Rule" id="MF_00178"/>
    </source>
</evidence>
<gene>
    <name evidence="1" type="primary">ribH</name>
    <name type="ordered locus">BCB4264_A4223</name>
</gene>
<protein>
    <recommendedName>
        <fullName evidence="1">6,7-dimethyl-8-ribityllumazine synthase</fullName>
        <shortName evidence="1">DMRL synthase</shortName>
        <shortName evidence="1">LS</shortName>
        <shortName evidence="1">Lumazine synthase</shortName>
        <ecNumber evidence="1">2.5.1.78</ecNumber>
    </recommendedName>
</protein>
<reference key="1">
    <citation type="submission" date="2008-10" db="EMBL/GenBank/DDBJ databases">
        <title>Genome sequence of Bacillus cereus B4264.</title>
        <authorList>
            <person name="Dodson R.J."/>
            <person name="Durkin A.S."/>
            <person name="Rosovitz M.J."/>
            <person name="Rasko D.A."/>
            <person name="Hoffmaster A."/>
            <person name="Ravel J."/>
            <person name="Sutton G."/>
        </authorList>
    </citation>
    <scope>NUCLEOTIDE SEQUENCE [LARGE SCALE GENOMIC DNA]</scope>
    <source>
        <strain>B4264</strain>
    </source>
</reference>
<keyword id="KW-0686">Riboflavin biosynthesis</keyword>
<keyword id="KW-0808">Transferase</keyword>
<accession>B7HAY5</accession>
<proteinExistence type="inferred from homology"/>
<comment type="function">
    <text evidence="1">Catalyzes the formation of 6,7-dimethyl-8-ribityllumazine by condensation of 5-amino-6-(D-ribitylamino)uracil with 3,4-dihydroxy-2-butanone 4-phosphate. This is the penultimate step in the biosynthesis of riboflavin.</text>
</comment>
<comment type="catalytic activity">
    <reaction evidence="1">
        <text>(2S)-2-hydroxy-3-oxobutyl phosphate + 5-amino-6-(D-ribitylamino)uracil = 6,7-dimethyl-8-(1-D-ribityl)lumazine + phosphate + 2 H2O + H(+)</text>
        <dbReference type="Rhea" id="RHEA:26152"/>
        <dbReference type="ChEBI" id="CHEBI:15377"/>
        <dbReference type="ChEBI" id="CHEBI:15378"/>
        <dbReference type="ChEBI" id="CHEBI:15934"/>
        <dbReference type="ChEBI" id="CHEBI:43474"/>
        <dbReference type="ChEBI" id="CHEBI:58201"/>
        <dbReference type="ChEBI" id="CHEBI:58830"/>
        <dbReference type="EC" id="2.5.1.78"/>
    </reaction>
</comment>
<comment type="pathway">
    <text evidence="1">Cofactor biosynthesis; riboflavin biosynthesis; riboflavin from 2-hydroxy-3-oxobutyl phosphate and 5-amino-6-(D-ribitylamino)uracil: step 1/2.</text>
</comment>
<comment type="subunit">
    <text evidence="1">Forms an icosahedral capsid composed of 60 subunits, arranged as a dodecamer of pentamers.</text>
</comment>
<comment type="similarity">
    <text evidence="1">Belongs to the DMRL synthase family.</text>
</comment>
<organism>
    <name type="scientific">Bacillus cereus (strain B4264)</name>
    <dbReference type="NCBI Taxonomy" id="405532"/>
    <lineage>
        <taxon>Bacteria</taxon>
        <taxon>Bacillati</taxon>
        <taxon>Bacillota</taxon>
        <taxon>Bacilli</taxon>
        <taxon>Bacillales</taxon>
        <taxon>Bacillaceae</taxon>
        <taxon>Bacillus</taxon>
        <taxon>Bacillus cereus group</taxon>
    </lineage>
</organism>
<sequence length="153" mass="16222">MVFEGHLVGTGLKVGVVVGRFNEFITSKLLGGALDGLKRHGVEESDIDVAWVPGAFEIPLIAKKMASSGKYDAVITLGTVIRGATTHYDYVCNEVAKGVASLSLQMDIPVIFGVLTTETIEQAIERAGTKAGNKGYESAVAAIEMAHLSKQWA</sequence>